<sequence length="220" mass="24583">MPGGLEALRALPLLLFLSYACLGPGCQALRVEGGPPSLTVNLGEEARLTCENNGRNPNITWWFSLQSNITWPPVPLGPGQGTTGQLFFPEVNKNHRGLYWCQVIENNILKRSCGTYLRVRNPVPRPFLDMGEGTKNRIITAEGIILLFCAVVPGTLLLFRKRWQNEKFGVDMPDDYEDENLYEGLNLDDCSMYEDISRGLQGTYQDVGNLHIGDAQLEKP</sequence>
<comment type="function">
    <text evidence="5 7 10 11 13 14 17 18 19 26 29">Required in cooperation with CD79B for initiation of the signal transduction cascade activated by binding of antigen to the B-cell antigen receptor complex (BCR) which leads to internalization of the complex, trafficking to late endosomes and antigen presentation. Also required for BCR surface expression and for efficient differentiation of pro- and pre-B-cells. Stimulates SYK autophosphorylation and activation. Binds to BLNK, bringing BLNK into proximity with SYK and allowing SYK to phosphorylate BLNK. Also interacts with and increases activity of some Src-family tyrosine kinases. Represses BCR signaling during development of immature B-cells.</text>
</comment>
<comment type="subunit">
    <text evidence="9 11 12 15 16 23 24 25 28">Heterodimer of alpha and beta chains; disulfide-linked. Part of the B-cell antigen receptor complex where the alpha/beta chain heterodimer is non-covalently associated with an antigen-specific membrane-bound surface immunoglobulin of two heavy chains and two light chains. Interacts through its phosphorylated ITAM domain with the SH2 domains of SYK which stimulates SYK autophosphorylation and activation. Also interacts, when phosphorylated on Tyr-204, with the SH2 domain of BLNK/SLP65, bringing BLNK into proximity with SYK and allowing SYK to phosphorylate BLNK which is necessary for trafficking of the BCR to late endosomes. Interacts with Src-family tyrosine kinases including FYN and LYN, increasing their activity.</text>
</comment>
<comment type="subcellular location">
    <subcellularLocation>
        <location evidence="6 8 17">Cell membrane</location>
        <topology evidence="6 8 17">Single-pass type I membrane protein</topology>
    </subcellularLocation>
    <text>Following antigen binding, the BCR has been shown to translocate from detergent-soluble regions of the cell membrane to lipid rafts although signal transduction through the complex can also occur outside lipid rafts.</text>
</comment>
<comment type="tissue specificity">
    <text>B-cells.</text>
</comment>
<comment type="domain">
    <text evidence="1">The transmembrane helices of CD79A and CD79B chains and two IgM heavy chains assembly in a four-helix bundle structure that appears to be conserved among different BCR isotypes.</text>
</comment>
<comment type="PTM">
    <text evidence="9 16 24 27">Phosphorylated on tyrosine, serine and threonine residues upon B-cell activation. Phosphorylation of tyrosine residues by Src-family kinases, including LYN, is an early and essential feature of the BCR signaling cascade. The phosphorylated tyrosines serve as docking sites for SH2-domain containing kinases, leading to their activation which in turn leads to phosphorylation of downstream targets. Phosphorylation of serine and threonine residues may prevent subsequent tyrosine phosphorylation.</text>
</comment>
<comment type="PTM">
    <text evidence="20">Arginine methylation in the ITAM domain may interfere with the binding of SYK. It promotes signals leading to B-cell differentiation.</text>
</comment>
<comment type="disruption phenotype">
    <text evidence="13">Mice display impaired B-cell development which does not progress pass the progenitor stage.</text>
</comment>
<organism>
    <name type="scientific">Mus musculus</name>
    <name type="common">Mouse</name>
    <dbReference type="NCBI Taxonomy" id="10090"/>
    <lineage>
        <taxon>Eukaryota</taxon>
        <taxon>Metazoa</taxon>
        <taxon>Chordata</taxon>
        <taxon>Craniata</taxon>
        <taxon>Vertebrata</taxon>
        <taxon>Euteleostomi</taxon>
        <taxon>Mammalia</taxon>
        <taxon>Eutheria</taxon>
        <taxon>Euarchontoglires</taxon>
        <taxon>Glires</taxon>
        <taxon>Rodentia</taxon>
        <taxon>Myomorpha</taxon>
        <taxon>Muroidea</taxon>
        <taxon>Muridae</taxon>
        <taxon>Murinae</taxon>
        <taxon>Mus</taxon>
        <taxon>Mus</taxon>
    </lineage>
</organism>
<evidence type="ECO:0000250" key="1">
    <source>
        <dbReference type="UniProtKB" id="P11912"/>
    </source>
</evidence>
<evidence type="ECO:0000255" key="2"/>
<evidence type="ECO:0000255" key="3">
    <source>
        <dbReference type="PROSITE-ProRule" id="PRU00114"/>
    </source>
</evidence>
<evidence type="ECO:0000255" key="4">
    <source>
        <dbReference type="PROSITE-ProRule" id="PRU00379"/>
    </source>
</evidence>
<evidence type="ECO:0000269" key="5">
    <source>
    </source>
</evidence>
<evidence type="ECO:0000269" key="6">
    <source>
    </source>
</evidence>
<evidence type="ECO:0000269" key="7">
    <source>
    </source>
</evidence>
<evidence type="ECO:0000269" key="8">
    <source>
    </source>
</evidence>
<evidence type="ECO:0000269" key="9">
    <source>
    </source>
</evidence>
<evidence type="ECO:0000269" key="10">
    <source>
    </source>
</evidence>
<evidence type="ECO:0000269" key="11">
    <source>
    </source>
</evidence>
<evidence type="ECO:0000269" key="12">
    <source>
    </source>
</evidence>
<evidence type="ECO:0000269" key="13">
    <source>
    </source>
</evidence>
<evidence type="ECO:0000269" key="14">
    <source>
    </source>
</evidence>
<evidence type="ECO:0000269" key="15">
    <source>
    </source>
</evidence>
<evidence type="ECO:0000269" key="16">
    <source>
    </source>
</evidence>
<evidence type="ECO:0000269" key="17">
    <source>
    </source>
</evidence>
<evidence type="ECO:0000269" key="18">
    <source>
    </source>
</evidence>
<evidence type="ECO:0000269" key="19">
    <source>
    </source>
</evidence>
<evidence type="ECO:0000269" key="20">
    <source>
    </source>
</evidence>
<evidence type="ECO:0000269" key="21">
    <source>
    </source>
</evidence>
<evidence type="ECO:0000269" key="22">
    <source>
    </source>
</evidence>
<evidence type="ECO:0000269" key="23">
    <source>
    </source>
</evidence>
<evidence type="ECO:0000269" key="24">
    <source>
    </source>
</evidence>
<evidence type="ECO:0000269" key="25">
    <source>
    </source>
</evidence>
<evidence type="ECO:0000269" key="26">
    <source>
    </source>
</evidence>
<evidence type="ECO:0000269" key="27">
    <source>
    </source>
</evidence>
<evidence type="ECO:0000269" key="28">
    <source>
    </source>
</evidence>
<evidence type="ECO:0000269" key="29">
    <source>
    </source>
</evidence>
<evidence type="ECO:0000305" key="30"/>
<name>CD79A_MOUSE</name>
<dbReference type="EMBL" id="X13450">
    <property type="protein sequence ID" value="CAA31801.1"/>
    <property type="molecule type" value="mRNA"/>
</dbReference>
<dbReference type="EMBL" id="M31773">
    <property type="protein sequence ID" value="AAA39494.1"/>
    <property type="molecule type" value="Genomic_DNA"/>
</dbReference>
<dbReference type="EMBL" id="BC027633">
    <property type="protein sequence ID" value="AAH27633.1"/>
    <property type="molecule type" value="mRNA"/>
</dbReference>
<dbReference type="EMBL" id="S59359">
    <property type="status" value="NOT_ANNOTATED_CDS"/>
    <property type="molecule type" value="Genomic_DNA"/>
</dbReference>
<dbReference type="CCDS" id="CCDS20967.1"/>
<dbReference type="PIR" id="A43540">
    <property type="entry name" value="A43540"/>
</dbReference>
<dbReference type="RefSeq" id="NP_031681.2">
    <property type="nucleotide sequence ID" value="NM_007655.4"/>
</dbReference>
<dbReference type="PDB" id="8E4C">
    <property type="method" value="EM"/>
    <property type="resolution" value="4.00 A"/>
    <property type="chains" value="C=1-169"/>
</dbReference>
<dbReference type="PDB" id="8EMA">
    <property type="method" value="EM"/>
    <property type="resolution" value="8.20 A"/>
    <property type="chains" value="C=1-172"/>
</dbReference>
<dbReference type="PDBsum" id="8E4C"/>
<dbReference type="PDBsum" id="8EMA"/>
<dbReference type="SMR" id="P11911"/>
<dbReference type="BioGRID" id="198611">
    <property type="interactions" value="4"/>
</dbReference>
<dbReference type="DIP" id="DIP-61170N"/>
<dbReference type="ELM" id="P11911"/>
<dbReference type="FunCoup" id="P11911">
    <property type="interactions" value="298"/>
</dbReference>
<dbReference type="IntAct" id="P11911">
    <property type="interactions" value="2"/>
</dbReference>
<dbReference type="STRING" id="10090.ENSMUSP00000003469"/>
<dbReference type="GlyCosmos" id="P11911">
    <property type="glycosylation" value="2 sites, No reported glycans"/>
</dbReference>
<dbReference type="GlyGen" id="P11911">
    <property type="glycosylation" value="2 sites"/>
</dbReference>
<dbReference type="iPTMnet" id="P11911"/>
<dbReference type="PhosphoSitePlus" id="P11911"/>
<dbReference type="PaxDb" id="10090-ENSMUSP00000003469"/>
<dbReference type="ProteomicsDB" id="281271"/>
<dbReference type="Antibodypedia" id="2990">
    <property type="antibodies" value="2297 antibodies from 48 providers"/>
</dbReference>
<dbReference type="DNASU" id="12518"/>
<dbReference type="Ensembl" id="ENSMUST00000003469.8">
    <property type="protein sequence ID" value="ENSMUSP00000003469.8"/>
    <property type="gene ID" value="ENSMUSG00000003379.8"/>
</dbReference>
<dbReference type="GeneID" id="12518"/>
<dbReference type="KEGG" id="mmu:12518"/>
<dbReference type="UCSC" id="uc009fqt.1">
    <property type="organism name" value="mouse"/>
</dbReference>
<dbReference type="AGR" id="MGI:101774"/>
<dbReference type="CTD" id="973"/>
<dbReference type="MGI" id="MGI:101774">
    <property type="gene designation" value="Cd79a"/>
</dbReference>
<dbReference type="VEuPathDB" id="HostDB:ENSMUSG00000003379"/>
<dbReference type="eggNOG" id="ENOG502S1DI">
    <property type="taxonomic scope" value="Eukaryota"/>
</dbReference>
<dbReference type="GeneTree" id="ENSGT00940000154363"/>
<dbReference type="HOGENOM" id="CLU_106774_0_0_1"/>
<dbReference type="InParanoid" id="P11911"/>
<dbReference type="OMA" id="RWQNEKF"/>
<dbReference type="OrthoDB" id="8915525at2759"/>
<dbReference type="PhylomeDB" id="P11911"/>
<dbReference type="TreeFam" id="TF336032"/>
<dbReference type="Reactome" id="R-MMU-5690714">
    <property type="pathway name" value="CD22 mediated BCR regulation"/>
</dbReference>
<dbReference type="Reactome" id="R-MMU-983695">
    <property type="pathway name" value="Antigen activates B Cell Receptor (BCR) leading to generation of second messengers"/>
</dbReference>
<dbReference type="BioGRID-ORCS" id="12518">
    <property type="hits" value="3 hits in 78 CRISPR screens"/>
</dbReference>
<dbReference type="ChiTaRS" id="Cd79a">
    <property type="organism name" value="mouse"/>
</dbReference>
<dbReference type="PRO" id="PR:P11911"/>
<dbReference type="Proteomes" id="UP000000589">
    <property type="component" value="Chromosome 7"/>
</dbReference>
<dbReference type="RNAct" id="P11911">
    <property type="molecule type" value="protein"/>
</dbReference>
<dbReference type="Bgee" id="ENSMUSG00000003379">
    <property type="expression patterns" value="Expressed in spleen and 47 other cell types or tissues"/>
</dbReference>
<dbReference type="GO" id="GO:0019815">
    <property type="term" value="C:B cell receptor complex"/>
    <property type="evidence" value="ECO:0000314"/>
    <property type="project" value="MGI"/>
</dbReference>
<dbReference type="GO" id="GO:0009897">
    <property type="term" value="C:external side of plasma membrane"/>
    <property type="evidence" value="ECO:0000314"/>
    <property type="project" value="MGI"/>
</dbReference>
<dbReference type="GO" id="GO:0071755">
    <property type="term" value="C:IgM B cell receptor complex"/>
    <property type="evidence" value="ECO:0000250"/>
    <property type="project" value="UniProtKB"/>
</dbReference>
<dbReference type="GO" id="GO:0045121">
    <property type="term" value="C:membrane raft"/>
    <property type="evidence" value="ECO:0000314"/>
    <property type="project" value="UniProtKB"/>
</dbReference>
<dbReference type="GO" id="GO:0005771">
    <property type="term" value="C:multivesicular body"/>
    <property type="evidence" value="ECO:0000314"/>
    <property type="project" value="MGI"/>
</dbReference>
<dbReference type="GO" id="GO:0005886">
    <property type="term" value="C:plasma membrane"/>
    <property type="evidence" value="ECO:0000304"/>
    <property type="project" value="Reactome"/>
</dbReference>
<dbReference type="GO" id="GO:0042802">
    <property type="term" value="F:identical protein binding"/>
    <property type="evidence" value="ECO:0007669"/>
    <property type="project" value="Ensembl"/>
</dbReference>
<dbReference type="GO" id="GO:0004888">
    <property type="term" value="F:transmembrane signaling receptor activity"/>
    <property type="evidence" value="ECO:0000314"/>
    <property type="project" value="UniProtKB"/>
</dbReference>
<dbReference type="GO" id="GO:0002250">
    <property type="term" value="P:adaptive immune response"/>
    <property type="evidence" value="ECO:0007669"/>
    <property type="project" value="UniProtKB-KW"/>
</dbReference>
<dbReference type="GO" id="GO:0042113">
    <property type="term" value="P:B cell activation"/>
    <property type="evidence" value="ECO:0000315"/>
    <property type="project" value="UniProtKB"/>
</dbReference>
<dbReference type="GO" id="GO:0030183">
    <property type="term" value="P:B cell differentiation"/>
    <property type="evidence" value="ECO:0000315"/>
    <property type="project" value="UniProtKB"/>
</dbReference>
<dbReference type="GO" id="GO:0042100">
    <property type="term" value="P:B cell proliferation"/>
    <property type="evidence" value="ECO:0000315"/>
    <property type="project" value="UniProtKB"/>
</dbReference>
<dbReference type="GO" id="GO:0050853">
    <property type="term" value="P:B cell receptor signaling pathway"/>
    <property type="evidence" value="ECO:0000314"/>
    <property type="project" value="UniProtKB"/>
</dbReference>
<dbReference type="FunFam" id="2.60.40.10:FF:003198">
    <property type="entry name" value="B-cell antigen receptor complex-associated protein alpha chain"/>
    <property type="match status" value="1"/>
</dbReference>
<dbReference type="Gene3D" id="2.60.40.10">
    <property type="entry name" value="Immunoglobulins"/>
    <property type="match status" value="1"/>
</dbReference>
<dbReference type="InterPro" id="IPR007110">
    <property type="entry name" value="Ig-like_dom"/>
</dbReference>
<dbReference type="InterPro" id="IPR036179">
    <property type="entry name" value="Ig-like_dom_sf"/>
</dbReference>
<dbReference type="InterPro" id="IPR013783">
    <property type="entry name" value="Ig-like_fold"/>
</dbReference>
<dbReference type="InterPro" id="IPR003599">
    <property type="entry name" value="Ig_sub"/>
</dbReference>
<dbReference type="InterPro" id="IPR013151">
    <property type="entry name" value="Immunoglobulin_dom"/>
</dbReference>
<dbReference type="InterPro" id="IPR003110">
    <property type="entry name" value="Phos_immunorcpt_sig_ITAM"/>
</dbReference>
<dbReference type="PANTHER" id="PTHR14334">
    <property type="entry name" value="B-CELL ANTIGEN RECEPTOR COMPLEX-ASSOCIATED PROTEIN"/>
    <property type="match status" value="1"/>
</dbReference>
<dbReference type="PANTHER" id="PTHR14334:SF1">
    <property type="entry name" value="B-CELL ANTIGEN RECEPTOR COMPLEX-ASSOCIATED PROTEIN ALPHA CHAIN"/>
    <property type="match status" value="1"/>
</dbReference>
<dbReference type="Pfam" id="PF00047">
    <property type="entry name" value="ig"/>
    <property type="match status" value="1"/>
</dbReference>
<dbReference type="Pfam" id="PF02189">
    <property type="entry name" value="ITAM"/>
    <property type="match status" value="1"/>
</dbReference>
<dbReference type="SMART" id="SM00409">
    <property type="entry name" value="IG"/>
    <property type="match status" value="1"/>
</dbReference>
<dbReference type="SMART" id="SM00077">
    <property type="entry name" value="ITAM"/>
    <property type="match status" value="1"/>
</dbReference>
<dbReference type="SUPFAM" id="SSF48726">
    <property type="entry name" value="Immunoglobulin"/>
    <property type="match status" value="1"/>
</dbReference>
<dbReference type="PROSITE" id="PS50835">
    <property type="entry name" value="IG_LIKE"/>
    <property type="match status" value="1"/>
</dbReference>
<dbReference type="PROSITE" id="PS51055">
    <property type="entry name" value="ITAM_1"/>
    <property type="match status" value="1"/>
</dbReference>
<gene>
    <name type="primary">Cd79a</name>
    <name type="synonym">Iga</name>
    <name type="synonym">Mb-1</name>
</gene>
<feature type="signal peptide" evidence="21 22">
    <location>
        <begin position="1"/>
        <end position="28"/>
    </location>
</feature>
<feature type="chain" id="PRO_0000014559" description="B-cell antigen receptor complex-associated protein alpha chain">
    <location>
        <begin position="29"/>
        <end position="220"/>
    </location>
</feature>
<feature type="topological domain" description="Extracellular" evidence="2">
    <location>
        <begin position="29"/>
        <end position="137"/>
    </location>
</feature>
<feature type="transmembrane region" description="Helical" evidence="2">
    <location>
        <begin position="138"/>
        <end position="159"/>
    </location>
</feature>
<feature type="topological domain" description="Cytoplasmic" evidence="2">
    <location>
        <begin position="160"/>
        <end position="220"/>
    </location>
</feature>
<feature type="domain" description="Ig-like C2-type">
    <location>
        <begin position="29"/>
        <end position="117"/>
    </location>
</feature>
<feature type="domain" description="ITAM" evidence="4">
    <location>
        <begin position="171"/>
        <end position="199"/>
    </location>
</feature>
<feature type="site" description="Required for binding to BLNK">
    <location>
        <position position="204"/>
    </location>
</feature>
<feature type="modified residue" description="Phosphotyrosine; by SRC-type Tyr-kinases" evidence="4 24 27">
    <location>
        <position position="182"/>
    </location>
</feature>
<feature type="modified residue" description="Phosphotyrosine; by SRC-type Tyr-kinases" evidence="4 24">
    <location>
        <position position="193"/>
    </location>
</feature>
<feature type="modified residue" description="Asymmetric dimethylarginine; by PRMT1" evidence="20">
    <location>
        <position position="198"/>
    </location>
</feature>
<feature type="modified residue" description="Phosphotyrosine; by Tyr-kinases" evidence="4 9">
    <location>
        <position position="204"/>
    </location>
</feature>
<feature type="glycosylation site" description="N-linked (GlcNAc...) asparagine" evidence="2">
    <location>
        <position position="58"/>
    </location>
</feature>
<feature type="glycosylation site" description="N-linked (GlcNAc...) asparagine" evidence="2">
    <location>
        <position position="68"/>
    </location>
</feature>
<feature type="disulfide bond" evidence="3">
    <location>
        <begin position="50"/>
        <end position="101"/>
    </location>
</feature>
<feature type="disulfide bond" description="Interchain (with C-135 in beta chain)" evidence="3">
    <location>
        <position position="113"/>
    </location>
</feature>
<feature type="mutagenesis site" description="Increases tyrosine phosphorylation. Inhibits phosphorylation of BLNK. Impaired antigen presentation; when associated with F-204." evidence="11 12 18 19 27">
    <original>Y</original>
    <variation>F</variation>
    <location>
        <position position="176"/>
    </location>
</feature>
<feature type="mutagenesis site" description="Strongly reduces tyrosine phosphorylation and pre-B-cell differentiation; when associated with F-193. Abolishes constitutive internalization of BCR." evidence="10 19 27 29">
    <original>Y</original>
    <variation>F</variation>
    <location>
        <position position="182"/>
    </location>
</feature>
<feature type="mutagenesis site" description="Strongly reduces tyrosine phosphorylation and pre-B-cell differentiation; when associated with F-182. No effect on constitutive internalization of BCR." evidence="10 19 27 29">
    <original>Y</original>
    <variation>F</variation>
    <location>
        <position position="193"/>
    </location>
</feature>
<feature type="mutagenesis site" description="Associates more strongly with SYK. Increases calcium response upon BCR ligation." evidence="20">
    <original>R</original>
    <variation>K</variation>
    <location>
        <position position="198"/>
    </location>
</feature>
<feature type="mutagenesis site" description="Has little effect on tyrosine phosphorylation. Reduces pre-B-cell differentiation. Abolishes binding to BLNK. Inhibits phosphorylation of BLNK. No effect on cap formation or BCR internalization. Impaired antigen presentation; when associated with F-176." evidence="9 11 12 18 19">
    <original>Y</original>
    <variation>F</variation>
    <location>
        <position position="204"/>
    </location>
</feature>
<feature type="sequence conflict" description="In Ref. 1; CAA31801 and 2; AAA39494." evidence="30" ref="1 2">
    <original>HRGLYW</original>
    <variation>TGACTG</variation>
    <location>
        <begin position="95"/>
        <end position="100"/>
    </location>
</feature>
<protein>
    <recommendedName>
        <fullName>B-cell antigen receptor complex-associated protein alpha chain</fullName>
    </recommendedName>
    <alternativeName>
        <fullName>Ig-alpha</fullName>
    </alternativeName>
    <alternativeName>
        <fullName>MB-1 membrane glycoprotein</fullName>
    </alternativeName>
    <alternativeName>
        <fullName>Membrane-bound immunoglobulin-associated protein</fullName>
    </alternativeName>
    <alternativeName>
        <fullName>Surface IgM-associated protein</fullName>
    </alternativeName>
    <cdAntigenName>CD79a</cdAntigenName>
</protein>
<proteinExistence type="evidence at protein level"/>
<keyword id="KW-0002">3D-structure</keyword>
<keyword id="KW-1064">Adaptive immunity</keyword>
<keyword id="KW-1003">Cell membrane</keyword>
<keyword id="KW-0903">Direct protein sequencing</keyword>
<keyword id="KW-1015">Disulfide bond</keyword>
<keyword id="KW-0325">Glycoprotein</keyword>
<keyword id="KW-0391">Immunity</keyword>
<keyword id="KW-0393">Immunoglobulin domain</keyword>
<keyword id="KW-0472">Membrane</keyword>
<keyword id="KW-0488">Methylation</keyword>
<keyword id="KW-0597">Phosphoprotein</keyword>
<keyword id="KW-0675">Receptor</keyword>
<keyword id="KW-1185">Reference proteome</keyword>
<keyword id="KW-0732">Signal</keyword>
<keyword id="KW-0812">Transmembrane</keyword>
<keyword id="KW-1133">Transmembrane helix</keyword>
<accession>P11911</accession>
<accession>Q6GTY0</accession>
<reference key="1">
    <citation type="journal article" date="1988" name="EMBO J.">
        <title>B lymphocyte lineage-restricted expression of mb-1, a gene with CD3-like structural properties.</title>
        <authorList>
            <person name="Sakaguchi N."/>
            <person name="Kashiwamura S."/>
            <person name="Kimoto M."/>
            <person name="Thalmann P."/>
            <person name="Melchers F."/>
        </authorList>
    </citation>
    <scope>NUCLEOTIDE SEQUENCE [MRNA]</scope>
    <source>
        <strain>C57BL/6 X DBA/2J</strain>
    </source>
</reference>
<reference key="2">
    <citation type="journal article" date="1990" name="J. Immunol.">
        <title>Structure of the murine mb-1 gene encoding a putative sIgM-associated molecule.</title>
        <authorList>
            <person name="Kashiwamura S."/>
            <person name="Koyama T."/>
            <person name="Matsuo T."/>
            <person name="Steinmetz M."/>
            <person name="Kimoto M."/>
            <person name="Sakaguchi N."/>
        </authorList>
    </citation>
    <scope>NUCLEOTIDE SEQUENCE [GENOMIC DNA]</scope>
    <source>
        <strain>BALB/cJ</strain>
        <tissue>Liver</tissue>
    </source>
</reference>
<reference key="3">
    <citation type="journal article" date="1992" name="Immunogenetics">
        <title>Molecular cloning of the Ig-alpha subunit of the human B-cell antigen receptor complex.</title>
        <authorList>
            <person name="Flaswinkel H."/>
            <person name="Reth M."/>
        </authorList>
    </citation>
    <scope>NUCLEOTIDE SEQUENCE</scope>
</reference>
<reference key="4">
    <citation type="journal article" date="2004" name="Genome Res.">
        <title>The status, quality, and expansion of the NIH full-length cDNA project: the Mammalian Gene Collection (MGC).</title>
        <authorList>
            <consortium name="The MGC Project Team"/>
        </authorList>
    </citation>
    <scope>NUCLEOTIDE SEQUENCE [LARGE SCALE MRNA]</scope>
    <source>
        <strain>C57BL/6J</strain>
        <tissue>Mammary gland</tissue>
    </source>
</reference>
<reference key="5">
    <citation type="journal article" date="1991" name="Mol. Cell. Biol.">
        <title>Heterogeneously initiated transcription from the pre-B- and B-cell-specific mb-1 promoter: analysis of the requirement for upstream factor-binding sites and initiation site sequences.</title>
        <authorList>
            <person name="Travis A."/>
            <person name="Hagman J."/>
            <person name="Grosschedl R."/>
        </authorList>
    </citation>
    <scope>NUCLEOTIDE SEQUENCE [GENOMIC DNA] OF 1-15</scope>
</reference>
<reference key="6">
    <citation type="journal article" date="1990" name="Eur. J. Immunol.">
        <title>Identification of the genes encoding the IgM-alpha and Ig-beta components of the IgM antigen receptor complex by amino-terminal sequencing.</title>
        <authorList>
            <person name="Hombach J."/>
            <person name="Lottspeich F."/>
            <person name="Reth M."/>
        </authorList>
    </citation>
    <scope>PROTEIN SEQUENCE OF 29-38</scope>
</reference>
<reference key="7">
    <citation type="journal article" date="1991" name="Proc. Natl. Acad. Sci. U.S.A.">
        <title>IgM antigen receptor complex contains phosphoprotein products of B29 and mb-1 genes.</title>
        <authorList>
            <person name="Campbell K.S."/>
            <person name="Hager E.J."/>
            <person name="Friedrich R.J."/>
            <person name="Cambier J.C."/>
        </authorList>
    </citation>
    <scope>PROTEIN SEQUENCE OF 29-38</scope>
</reference>
<reference key="8">
    <citation type="journal article" date="1992" name="J. Immunol.">
        <title>The MB-1/B29 heterodimer couples the B cell antigen receptor to multiple src family protein tyrosine kinases.</title>
        <authorList>
            <person name="Lin J."/>
            <person name="Justement L.B."/>
        </authorList>
    </citation>
    <scope>INTERACTION WITH BLK</scope>
</reference>
<reference key="9">
    <citation type="journal article" date="1993" name="Curr. Biol.">
        <title>B-cell antigen receptor motifs have redundant signalling capabilities and bind the tyrosine kinases PTK72, Lyn and Fyn.</title>
        <authorList>
            <person name="Law D.A."/>
            <person name="Chan V.W."/>
            <person name="Datta S.K."/>
            <person name="DeFranco A.L."/>
        </authorList>
    </citation>
    <scope>INTERACTION WITH LYN</scope>
    <scope>PHOSPHORYLATION</scope>
</reference>
<reference key="10">
    <citation type="journal article" date="1994" name="EMBO J.">
        <title>Dual role of the tyrosine activation motif of the Ig-alpha protein during signal transduction via the B cell antigen receptor.</title>
        <authorList>
            <person name="Flaswinkel H."/>
            <person name="Reth M."/>
        </authorList>
    </citation>
    <scope>PHOSPHORYLATION AT TYR-182</scope>
    <scope>MUTAGENESIS OF TYR-176; TYR-182 AND TYR-193</scope>
</reference>
<reference key="11">
    <citation type="journal article" date="1994" name="EMBO J.">
        <title>Analysis of Ig-alpha-tyrosine kinase interaction reveals two levels of binding specificity and tyrosine phosphorylated Ig-alpha stimulation of Fyn activity.</title>
        <authorList>
            <person name="Clark M.R."/>
            <person name="Johnson S.A."/>
            <person name="Cambier J.C."/>
        </authorList>
    </citation>
    <scope>INTERACTION WITH FYN AND LYN</scope>
</reference>
<reference key="12">
    <citation type="journal article" date="1994" name="J. Biol. Chem.">
        <title>Activation of B- and T-cells by the cytoplasmic domains of the B-cell antigen receptor proteins Ig-alpha and Ig-beta.</title>
        <authorList>
            <person name="Taddie J.A."/>
            <person name="Hurley T.R."/>
            <person name="Hardwick B.S."/>
            <person name="Sefton B.M."/>
        </authorList>
    </citation>
    <scope>FUNCTION</scope>
</reference>
<reference key="13">
    <citation type="journal article" date="1995" name="J. Biol. Chem.">
        <title>Syk protein-tyrosine kinase is regulated by tyrosine-phosphorylated Ig alpha/Ig beta immunoreceptor tyrosine activation motif binding and autophosphorylation.</title>
        <authorList>
            <person name="Rowley R.B."/>
            <person name="Burkhardt A.L."/>
            <person name="Chao H.-G."/>
            <person name="Matsueda G.R."/>
            <person name="Bolen J.B."/>
        </authorList>
    </citation>
    <scope>INTERACTION WITH SYK</scope>
</reference>
<reference key="14">
    <citation type="journal article" date="1995" name="J. Biol. Chem.">
        <title>Reconstitution of the B cell antigen receptor signaling components in COS cells.</title>
        <authorList>
            <person name="Saouaf S.J."/>
            <person name="Kut S.A."/>
            <person name="Fargnoli J."/>
            <person name="Rowley R.B."/>
            <person name="Bolen J.B."/>
            <person name="Mahajan S."/>
        </authorList>
    </citation>
    <scope>INTERACTION WITH BLK</scope>
    <scope>PHOSPHORYLATION AT TYR-182 AND TYR-193</scope>
</reference>
<reference key="15">
    <citation type="journal article" date="1996" name="J. Exp. Med.">
        <title>The two membrane isoforms of human IgE assemble into functionally distinct B cell antigen receptors.</title>
        <authorList>
            <person name="Batista F.D."/>
            <person name="Anand S."/>
            <person name="Presani G."/>
            <person name="Efremov D.G."/>
            <person name="Burrone O.R."/>
        </authorList>
    </citation>
    <scope>SUBUNIT</scope>
</reference>
<reference key="16">
    <citation type="journal article" date="1998" name="J. Immunol.">
        <title>A tyrosine-based signal present in Ig alpha mediates B cell receptor constitutive internalization.</title>
        <authorList>
            <person name="Cassard S."/>
            <person name="Salamero J."/>
            <person name="Hanau D."/>
            <person name="Spehner D."/>
            <person name="Davoust J."/>
            <person name="Fridman W.H."/>
            <person name="Bonnerot C."/>
        </authorList>
    </citation>
    <scope>FUNCTION</scope>
    <scope>MUTAGENESIS OF TYR-182 AND TYR-193</scope>
</reference>
<reference key="17">
    <citation type="journal article" date="1999" name="Immunity">
        <title>A negative regulatory role for Ig-alpha during B cell development.</title>
        <authorList>
            <person name="Torres R.M."/>
            <person name="Hafen K."/>
        </authorList>
    </citation>
    <scope>FUNCTION</scope>
</reference>
<reference key="18">
    <citation type="journal article" date="1999" name="J. Exp. Med.">
        <title>A role for lipid rafts in B cell antigen receptor signaling and antigen targeting.</title>
        <authorList>
            <person name="Cheng P.C."/>
            <person name="Dykstra M.L."/>
            <person name="Mitchell R.N."/>
            <person name="Pierce S.K."/>
        </authorList>
    </citation>
    <scope>SUBCELLULAR LOCATION</scope>
</reference>
<reference key="19">
    <citation type="journal article" date="1999" name="J. Immunol.">
        <title>Ig alpha and Ig beta are required for efficient trafficking to late endosomes and to enhance antigen presentation.</title>
        <authorList>
            <person name="Siemasko K."/>
            <person name="Eisfelder B.J."/>
            <person name="Stebbins C."/>
            <person name="Kabak S."/>
            <person name="Sant A.J."/>
            <person name="Song W."/>
            <person name="Clark M.R."/>
        </authorList>
    </citation>
    <scope>FUNCTION</scope>
</reference>
<reference key="20">
    <citation type="journal article" date="2001" name="Eur. J. Immunol.">
        <title>Association of SLP-65/BLNK with the B cell antigen receptor through a non-ITAM tyrosine of Ig-alpha.</title>
        <authorList>
            <person name="Engels N."/>
            <person name="Wollscheid B."/>
            <person name="Wienands J."/>
        </authorList>
    </citation>
    <scope>INTERACTION WITH BLNK</scope>
    <scope>PHOSPHORYLATION AT TYR-204</scope>
    <scope>MUTAGENESIS OF TYR-204</scope>
</reference>
<reference key="21">
    <citation type="journal article" date="2001" name="J. Exp. Med.">
        <title>Interference with immunoglobulin (Ig)alpha immunoreceptor tyrosine-based activation motif (ITAM) phosphorylation modulates or blocks B cell development, depending on the availability of an Igbeta cytoplasmic tail.</title>
        <authorList>
            <person name="Kraus M."/>
            <person name="Pao L.I."/>
            <person name="Reichlin A."/>
            <person name="Hu Y."/>
            <person name="Canono B."/>
            <person name="Cambier J.C."/>
            <person name="Nussenzweig M.C."/>
            <person name="Rajewsky K."/>
        </authorList>
    </citation>
    <scope>FUNCTION</scope>
    <scope>MUTAGENESIS OF TYR-182 AND TYR-193</scope>
</reference>
<reference key="22">
    <citation type="journal article" date="2001" name="J. Immunol.">
        <title>Translocation of the B cell antigen receptor into lipid rafts reveals a novel step in signaling.</title>
        <authorList>
            <person name="Cheng P.C."/>
            <person name="Brown B.K."/>
            <person name="Song W."/>
            <person name="Pierce S.K."/>
        </authorList>
    </citation>
    <scope>SUBCELLULAR LOCATION</scope>
</reference>
<reference key="23">
    <citation type="journal article" date="2002" name="Int. Immunol.">
        <title>Cooperative interaction of Ig(alpha) and Ig(beta) of the BCR regulates the kinetics and specificity of antigen targeting.</title>
        <authorList>
            <person name="Li C."/>
            <person name="Siemasko K."/>
            <person name="Clark M.R."/>
            <person name="Song W."/>
        </authorList>
    </citation>
    <scope>FUNCTION</scope>
</reference>
<reference key="24">
    <citation type="journal article" date="2002" name="J. Immunol.">
        <title>Receptor-facilitated antigen presentation requires the recruitment of B cell linker protein to Igalpha.</title>
        <authorList>
            <person name="Siemasko K."/>
            <person name="Skaggs B.J."/>
            <person name="Kabak S."/>
            <person name="Williamson E."/>
            <person name="Brown B.K."/>
            <person name="Song W."/>
            <person name="Clark M.R."/>
        </authorList>
    </citation>
    <scope>FUNCTION</scope>
    <scope>INTERACTION WITH BLNK</scope>
    <scope>MUTAGENESIS OF TYR-176 AND TYR-204</scope>
</reference>
<reference key="25">
    <citation type="journal article" date="2002" name="J. Immunol.">
        <title>B cell progenitors are arrested in maturation but have intact VDJ recombination in the absence of Ig-alpha and Ig-beta.</title>
        <authorList>
            <person name="Pelanda R."/>
            <person name="Braun U."/>
            <person name="Hobeika E."/>
            <person name="Nussenzweig M.C."/>
            <person name="Reth M."/>
        </authorList>
    </citation>
    <scope>FUNCTION</scope>
    <scope>DISRUPTION PHENOTYPE</scope>
</reference>
<reference key="26">
    <citation type="journal article" date="2002" name="Mol. Cell. Biol.">
        <title>The direct recruitment of BLNK to immunoglobulin alpha couples the B-cell antigen receptor to distal signaling pathways.</title>
        <authorList>
            <person name="Kabak S."/>
            <person name="Skaggs B.J."/>
            <person name="Gold M.R."/>
            <person name="Affolter M."/>
            <person name="West K.L."/>
            <person name="Foster M.S."/>
            <person name="Siemasko K."/>
            <person name="Chan A.C."/>
            <person name="Aebersold R."/>
            <person name="Clark M.R."/>
        </authorList>
    </citation>
    <scope>INTERACTION WITH BLNK</scope>
    <scope>MUTAGENESIS OF TYR-176 AND TYR-204</scope>
</reference>
<reference key="27">
    <citation type="journal article" date="2005" name="J. Immunol.">
        <title>Ig alpha/Ig beta complexes generate signals for B cell development independent of selective plasma membrane compartmentalization.</title>
        <authorList>
            <person name="Fuentes-Panana E.M."/>
            <person name="Bannish G."/>
            <person name="van der Voort D."/>
            <person name="King L.B."/>
            <person name="Monroe J.G."/>
        </authorList>
    </citation>
    <scope>FUNCTION</scope>
    <scope>SUBCELLULAR LOCATION</scope>
</reference>
<reference key="28">
    <citation type="journal article" date="2006" name="Immunity">
        <title>The B cell receptor promotes B cell activation and proliferation through a non-ITAM tyrosine in the Igalpha cytoplasmic domain.</title>
        <authorList>
            <person name="Patterson H.C.K."/>
            <person name="Kraus M."/>
            <person name="Kim Y.-M."/>
            <person name="Ploegh H."/>
            <person name="Rajewsky K."/>
        </authorList>
    </citation>
    <scope>FUNCTION</scope>
    <scope>MUTAGENESIS OF TYR-176 AND TYR-204</scope>
</reference>
<reference key="29">
    <citation type="journal article" date="2007" name="Eur. J. Immunol.">
        <title>The Ig-alpha ITAM is required for efficient differentiation but not proliferation of pre-B cells.</title>
        <authorList>
            <person name="Storch B."/>
            <person name="Meixlsperger S."/>
            <person name="Jumaa H."/>
        </authorList>
    </citation>
    <scope>FUNCTION</scope>
    <scope>MUTAGENESIS OF TYR-176; TYR-182; TYR-193 AND TYR-204</scope>
</reference>
<reference key="30">
    <citation type="journal article" date="2010" name="Cell">
        <title>A tissue-specific atlas of mouse protein phosphorylation and expression.</title>
        <authorList>
            <person name="Huttlin E.L."/>
            <person name="Jedrychowski M.P."/>
            <person name="Elias J.E."/>
            <person name="Goswami T."/>
            <person name="Rad R."/>
            <person name="Beausoleil S.A."/>
            <person name="Villen J."/>
            <person name="Haas W."/>
            <person name="Sowa M.E."/>
            <person name="Gygi S.P."/>
        </authorList>
    </citation>
    <scope>IDENTIFICATION BY MASS SPECTROMETRY [LARGE SCALE ANALYSIS]</scope>
    <source>
        <tissue>Spleen</tissue>
    </source>
</reference>
<reference key="31">
    <citation type="journal article" date="2010" name="J. Exp. Med.">
        <title>Arginine methylation of the B cell antigen receptor promotes differentiation.</title>
        <authorList>
            <person name="Infantino S."/>
            <person name="Benz B."/>
            <person name="Waldmann T."/>
            <person name="Jung M."/>
            <person name="Schneider R."/>
            <person name="Reth M."/>
        </authorList>
    </citation>
    <scope>METHYLATION AT ARG-198 BY PRMT1</scope>
    <scope>MUTAGENESIS OF ARG-198</scope>
</reference>